<gene>
    <name evidence="1" type="primary">apt</name>
    <name type="ordered locus">SAHV_1622</name>
</gene>
<evidence type="ECO:0000255" key="1">
    <source>
        <dbReference type="HAMAP-Rule" id="MF_00004"/>
    </source>
</evidence>
<name>APT_STAA1</name>
<keyword id="KW-0963">Cytoplasm</keyword>
<keyword id="KW-0328">Glycosyltransferase</keyword>
<keyword id="KW-0660">Purine salvage</keyword>
<keyword id="KW-0808">Transferase</keyword>
<sequence length="172" mass="19117">MDLKQYVSEVQDWPKPGVSFKDITTIMDNGEAYGYATDKIVEYAKDRDVDIVVGPEARGFIIGCPVAYSMGIGFAPVRKEGKLPREVIRYEYDLEYGTNVLTMHKDAIKPGQRVLITDDLLATGGTIEAAIKLVEKLGGIVVGIAFIIELKYLNGIEKIKDYDVMSLISYDE</sequence>
<comment type="function">
    <text evidence="1">Catalyzes a salvage reaction resulting in the formation of AMP, that is energically less costly than de novo synthesis.</text>
</comment>
<comment type="catalytic activity">
    <reaction evidence="1">
        <text>AMP + diphosphate = 5-phospho-alpha-D-ribose 1-diphosphate + adenine</text>
        <dbReference type="Rhea" id="RHEA:16609"/>
        <dbReference type="ChEBI" id="CHEBI:16708"/>
        <dbReference type="ChEBI" id="CHEBI:33019"/>
        <dbReference type="ChEBI" id="CHEBI:58017"/>
        <dbReference type="ChEBI" id="CHEBI:456215"/>
        <dbReference type="EC" id="2.4.2.7"/>
    </reaction>
</comment>
<comment type="pathway">
    <text evidence="1">Purine metabolism; AMP biosynthesis via salvage pathway; AMP from adenine: step 1/1.</text>
</comment>
<comment type="subunit">
    <text evidence="1">Homodimer.</text>
</comment>
<comment type="subcellular location">
    <subcellularLocation>
        <location evidence="1">Cytoplasm</location>
    </subcellularLocation>
</comment>
<comment type="similarity">
    <text evidence="1">Belongs to the purine/pyrimidine phosphoribosyltransferase family.</text>
</comment>
<proteinExistence type="inferred from homology"/>
<feature type="chain" id="PRO_1000000345" description="Adenine phosphoribosyltransferase">
    <location>
        <begin position="1"/>
        <end position="172"/>
    </location>
</feature>
<dbReference type="EC" id="2.4.2.7" evidence="1"/>
<dbReference type="EMBL" id="AP009324">
    <property type="protein sequence ID" value="BAF78505.1"/>
    <property type="molecule type" value="Genomic_DNA"/>
</dbReference>
<dbReference type="RefSeq" id="WP_000364542.1">
    <property type="nucleotide sequence ID" value="NZ_CTYB01000003.1"/>
</dbReference>
<dbReference type="SMR" id="A7X350"/>
<dbReference type="KEGG" id="saw:SAHV_1622"/>
<dbReference type="HOGENOM" id="CLU_063339_3_0_9"/>
<dbReference type="UniPathway" id="UPA00588">
    <property type="reaction ID" value="UER00646"/>
</dbReference>
<dbReference type="GO" id="GO:0005737">
    <property type="term" value="C:cytoplasm"/>
    <property type="evidence" value="ECO:0007669"/>
    <property type="project" value="UniProtKB-SubCell"/>
</dbReference>
<dbReference type="GO" id="GO:0002055">
    <property type="term" value="F:adenine binding"/>
    <property type="evidence" value="ECO:0007669"/>
    <property type="project" value="TreeGrafter"/>
</dbReference>
<dbReference type="GO" id="GO:0003999">
    <property type="term" value="F:adenine phosphoribosyltransferase activity"/>
    <property type="evidence" value="ECO:0007669"/>
    <property type="project" value="UniProtKB-UniRule"/>
</dbReference>
<dbReference type="GO" id="GO:0016208">
    <property type="term" value="F:AMP binding"/>
    <property type="evidence" value="ECO:0007669"/>
    <property type="project" value="TreeGrafter"/>
</dbReference>
<dbReference type="GO" id="GO:0006168">
    <property type="term" value="P:adenine salvage"/>
    <property type="evidence" value="ECO:0007669"/>
    <property type="project" value="InterPro"/>
</dbReference>
<dbReference type="GO" id="GO:0044209">
    <property type="term" value="P:AMP salvage"/>
    <property type="evidence" value="ECO:0007669"/>
    <property type="project" value="UniProtKB-UniRule"/>
</dbReference>
<dbReference type="GO" id="GO:0006166">
    <property type="term" value="P:purine ribonucleoside salvage"/>
    <property type="evidence" value="ECO:0007669"/>
    <property type="project" value="UniProtKB-KW"/>
</dbReference>
<dbReference type="CDD" id="cd06223">
    <property type="entry name" value="PRTases_typeI"/>
    <property type="match status" value="1"/>
</dbReference>
<dbReference type="FunFam" id="3.40.50.2020:FF:000004">
    <property type="entry name" value="Adenine phosphoribosyltransferase"/>
    <property type="match status" value="1"/>
</dbReference>
<dbReference type="Gene3D" id="3.40.50.2020">
    <property type="match status" value="1"/>
</dbReference>
<dbReference type="HAMAP" id="MF_00004">
    <property type="entry name" value="Aden_phosphoribosyltr"/>
    <property type="match status" value="1"/>
</dbReference>
<dbReference type="InterPro" id="IPR005764">
    <property type="entry name" value="Ade_phspho_trans"/>
</dbReference>
<dbReference type="InterPro" id="IPR000836">
    <property type="entry name" value="PRibTrfase_dom"/>
</dbReference>
<dbReference type="InterPro" id="IPR029057">
    <property type="entry name" value="PRTase-like"/>
</dbReference>
<dbReference type="InterPro" id="IPR050054">
    <property type="entry name" value="UPRTase/APRTase"/>
</dbReference>
<dbReference type="NCBIfam" id="TIGR01090">
    <property type="entry name" value="apt"/>
    <property type="match status" value="1"/>
</dbReference>
<dbReference type="NCBIfam" id="NF002633">
    <property type="entry name" value="PRK02304.1-2"/>
    <property type="match status" value="1"/>
</dbReference>
<dbReference type="NCBIfam" id="NF002634">
    <property type="entry name" value="PRK02304.1-3"/>
    <property type="match status" value="1"/>
</dbReference>
<dbReference type="NCBIfam" id="NF002636">
    <property type="entry name" value="PRK02304.1-5"/>
    <property type="match status" value="1"/>
</dbReference>
<dbReference type="PANTHER" id="PTHR32315">
    <property type="entry name" value="ADENINE PHOSPHORIBOSYLTRANSFERASE"/>
    <property type="match status" value="1"/>
</dbReference>
<dbReference type="PANTHER" id="PTHR32315:SF3">
    <property type="entry name" value="ADENINE PHOSPHORIBOSYLTRANSFERASE"/>
    <property type="match status" value="1"/>
</dbReference>
<dbReference type="Pfam" id="PF00156">
    <property type="entry name" value="Pribosyltran"/>
    <property type="match status" value="1"/>
</dbReference>
<dbReference type="SUPFAM" id="SSF53271">
    <property type="entry name" value="PRTase-like"/>
    <property type="match status" value="1"/>
</dbReference>
<organism>
    <name type="scientific">Staphylococcus aureus (strain Mu3 / ATCC 700698)</name>
    <dbReference type="NCBI Taxonomy" id="418127"/>
    <lineage>
        <taxon>Bacteria</taxon>
        <taxon>Bacillati</taxon>
        <taxon>Bacillota</taxon>
        <taxon>Bacilli</taxon>
        <taxon>Bacillales</taxon>
        <taxon>Staphylococcaceae</taxon>
        <taxon>Staphylococcus</taxon>
    </lineage>
</organism>
<reference key="1">
    <citation type="journal article" date="2008" name="Antimicrob. Agents Chemother.">
        <title>Mutated response regulator graR is responsible for phenotypic conversion of Staphylococcus aureus from heterogeneous vancomycin-intermediate resistance to vancomycin-intermediate resistance.</title>
        <authorList>
            <person name="Neoh H.-M."/>
            <person name="Cui L."/>
            <person name="Yuzawa H."/>
            <person name="Takeuchi F."/>
            <person name="Matsuo M."/>
            <person name="Hiramatsu K."/>
        </authorList>
    </citation>
    <scope>NUCLEOTIDE SEQUENCE [LARGE SCALE GENOMIC DNA]</scope>
    <source>
        <strain>Mu3 / ATCC 700698</strain>
    </source>
</reference>
<accession>A7X350</accession>
<protein>
    <recommendedName>
        <fullName evidence="1">Adenine phosphoribosyltransferase</fullName>
        <shortName evidence="1">APRT</shortName>
        <ecNumber evidence="1">2.4.2.7</ecNumber>
    </recommendedName>
</protein>